<reference key="1">
    <citation type="journal article" date="2002" name="J. Bacteriol.">
        <title>The superoxide dismutase gene sodM is unique to Staphylococcus aureus: absence of sodM in coagulase-negative staphylococci.</title>
        <authorList>
            <person name="Wright Valderas M."/>
            <person name="Gatson J.W."/>
            <person name="Wreyford N."/>
            <person name="Hart M.E."/>
        </authorList>
    </citation>
    <scope>NUCLEOTIDE SEQUENCE [GENOMIC DNA]</scope>
    <scope>CATALYTIC ACTIVITY</scope>
    <scope>SUBUNIT</scope>
</reference>
<reference key="2">
    <citation type="journal article" date="2003" name="Mol. Microbiol.">
        <title>Genome-based analysis of virulence genes in a non-biofilm-forming Staphylococcus epidermidis strain (ATCC 12228).</title>
        <authorList>
            <person name="Zhang Y.-Q."/>
            <person name="Ren S.-X."/>
            <person name="Li H.-L."/>
            <person name="Wang Y.-X."/>
            <person name="Fu G."/>
            <person name="Yang J."/>
            <person name="Qin Z.-Q."/>
            <person name="Miao Y.-G."/>
            <person name="Wang W.-Y."/>
            <person name="Chen R.-S."/>
            <person name="Shen Y."/>
            <person name="Chen Z."/>
            <person name="Yuan Z.-H."/>
            <person name="Zhao G.-P."/>
            <person name="Qu D."/>
            <person name="Danchin A."/>
            <person name="Wen Y.-M."/>
        </authorList>
    </citation>
    <scope>NUCLEOTIDE SEQUENCE [LARGE SCALE GENOMIC DNA]</scope>
    <source>
        <strain>ATCC 12228 / FDA PCI 1200</strain>
    </source>
</reference>
<gene>
    <name type="primary">sodA</name>
    <name type="ordered locus">SE_1240</name>
</gene>
<evidence type="ECO:0000250" key="1">
    <source>
        <dbReference type="UniProtKB" id="P80293"/>
    </source>
</evidence>
<evidence type="ECO:0000269" key="2">
    <source>
    </source>
</evidence>
<evidence type="ECO:0000305" key="3"/>
<evidence type="ECO:0000305" key="4">
    <source>
    </source>
</evidence>
<organism>
    <name type="scientific">Staphylococcus epidermidis (strain ATCC 12228 / FDA PCI 1200)</name>
    <dbReference type="NCBI Taxonomy" id="176280"/>
    <lineage>
        <taxon>Bacteria</taxon>
        <taxon>Bacillati</taxon>
        <taxon>Bacillota</taxon>
        <taxon>Bacilli</taxon>
        <taxon>Bacillales</taxon>
        <taxon>Staphylococcaceae</taxon>
        <taxon>Staphylococcus</taxon>
    </lineage>
</organism>
<name>SODM_STAES</name>
<comment type="function">
    <text evidence="1">Destroys superoxide anion radicals which are normally produced within the cells and which are toxic to biological systems. Catalyzes the dismutation of superoxide anion radicals into O2 and H2O2 by successive reduction and oxidation of the transition metal ion at the active site.</text>
</comment>
<comment type="catalytic activity">
    <reaction evidence="4">
        <text>2 superoxide + 2 H(+) = H2O2 + O2</text>
        <dbReference type="Rhea" id="RHEA:20696"/>
        <dbReference type="ChEBI" id="CHEBI:15378"/>
        <dbReference type="ChEBI" id="CHEBI:15379"/>
        <dbReference type="ChEBI" id="CHEBI:16240"/>
        <dbReference type="ChEBI" id="CHEBI:18421"/>
        <dbReference type="EC" id="1.15.1.1"/>
    </reaction>
    <physiologicalReaction direction="left-to-right" evidence="4">
        <dbReference type="Rhea" id="RHEA:20697"/>
    </physiologicalReaction>
</comment>
<comment type="cofactor">
    <cofactor evidence="1">
        <name>Mn(2+)</name>
        <dbReference type="ChEBI" id="CHEBI:29035"/>
    </cofactor>
    <cofactor evidence="1">
        <name>Fe(3+)</name>
        <dbReference type="ChEBI" id="CHEBI:29034"/>
    </cofactor>
    <text evidence="1">Binds 1 Mn(2+) or Fe(3+) ion per subunit.</text>
</comment>
<comment type="subunit">
    <text evidence="2">Homodimer.</text>
</comment>
<comment type="similarity">
    <text evidence="3">Belongs to the iron/manganese superoxide dismutase family.</text>
</comment>
<dbReference type="EC" id="1.15.1.1" evidence="4"/>
<dbReference type="EMBL" id="AF410177">
    <property type="protein sequence ID" value="AAL09677.1"/>
    <property type="molecule type" value="Genomic_DNA"/>
</dbReference>
<dbReference type="EMBL" id="AE015929">
    <property type="protein sequence ID" value="AAO04839.1"/>
    <property type="molecule type" value="Genomic_DNA"/>
</dbReference>
<dbReference type="RefSeq" id="NP_764795.1">
    <property type="nucleotide sequence ID" value="NC_004461.1"/>
</dbReference>
<dbReference type="RefSeq" id="WP_001831217.1">
    <property type="nucleotide sequence ID" value="NZ_WBME01000008.1"/>
</dbReference>
<dbReference type="SMR" id="P0C0Q6"/>
<dbReference type="KEGG" id="sep:SE_1240"/>
<dbReference type="PATRIC" id="fig|176280.10.peg.1208"/>
<dbReference type="eggNOG" id="COG0605">
    <property type="taxonomic scope" value="Bacteria"/>
</dbReference>
<dbReference type="HOGENOM" id="CLU_031625_0_1_9"/>
<dbReference type="OrthoDB" id="9803125at2"/>
<dbReference type="Proteomes" id="UP000001411">
    <property type="component" value="Chromosome"/>
</dbReference>
<dbReference type="GO" id="GO:0005737">
    <property type="term" value="C:cytoplasm"/>
    <property type="evidence" value="ECO:0007669"/>
    <property type="project" value="TreeGrafter"/>
</dbReference>
<dbReference type="GO" id="GO:0046872">
    <property type="term" value="F:metal ion binding"/>
    <property type="evidence" value="ECO:0007669"/>
    <property type="project" value="UniProtKB-KW"/>
</dbReference>
<dbReference type="GO" id="GO:0004784">
    <property type="term" value="F:superoxide dismutase activity"/>
    <property type="evidence" value="ECO:0007669"/>
    <property type="project" value="UniProtKB-EC"/>
</dbReference>
<dbReference type="FunFam" id="1.10.287.990:FF:000001">
    <property type="entry name" value="Superoxide dismutase"/>
    <property type="match status" value="1"/>
</dbReference>
<dbReference type="FunFam" id="3.55.40.20:FF:000001">
    <property type="entry name" value="Superoxide dismutase"/>
    <property type="match status" value="1"/>
</dbReference>
<dbReference type="Gene3D" id="1.10.287.990">
    <property type="entry name" value="Fe,Mn superoxide dismutase (SOD) domain"/>
    <property type="match status" value="1"/>
</dbReference>
<dbReference type="Gene3D" id="3.55.40.20">
    <property type="entry name" value="Iron/manganese superoxide dismutase, C-terminal domain"/>
    <property type="match status" value="1"/>
</dbReference>
<dbReference type="InterPro" id="IPR001189">
    <property type="entry name" value="Mn/Fe_SOD"/>
</dbReference>
<dbReference type="InterPro" id="IPR019833">
    <property type="entry name" value="Mn/Fe_SOD_BS"/>
</dbReference>
<dbReference type="InterPro" id="IPR019832">
    <property type="entry name" value="Mn/Fe_SOD_C"/>
</dbReference>
<dbReference type="InterPro" id="IPR019831">
    <property type="entry name" value="Mn/Fe_SOD_N"/>
</dbReference>
<dbReference type="InterPro" id="IPR036324">
    <property type="entry name" value="Mn/Fe_SOD_N_sf"/>
</dbReference>
<dbReference type="InterPro" id="IPR036314">
    <property type="entry name" value="SOD_C_sf"/>
</dbReference>
<dbReference type="PANTHER" id="PTHR43595">
    <property type="entry name" value="37S RIBOSOMAL PROTEIN S26, MITOCHONDRIAL"/>
    <property type="match status" value="1"/>
</dbReference>
<dbReference type="PANTHER" id="PTHR43595:SF2">
    <property type="entry name" value="SMALL RIBOSOMAL SUBUNIT PROTEIN MS42"/>
    <property type="match status" value="1"/>
</dbReference>
<dbReference type="Pfam" id="PF02777">
    <property type="entry name" value="Sod_Fe_C"/>
    <property type="match status" value="1"/>
</dbReference>
<dbReference type="Pfam" id="PF00081">
    <property type="entry name" value="Sod_Fe_N"/>
    <property type="match status" value="1"/>
</dbReference>
<dbReference type="PIRSF" id="PIRSF000349">
    <property type="entry name" value="SODismutase"/>
    <property type="match status" value="1"/>
</dbReference>
<dbReference type="PRINTS" id="PR01703">
    <property type="entry name" value="MNSODISMTASE"/>
</dbReference>
<dbReference type="SUPFAM" id="SSF54719">
    <property type="entry name" value="Fe,Mn superoxide dismutase (SOD), C-terminal domain"/>
    <property type="match status" value="1"/>
</dbReference>
<dbReference type="SUPFAM" id="SSF46609">
    <property type="entry name" value="Fe,Mn superoxide dismutase (SOD), N-terminal domain"/>
    <property type="match status" value="1"/>
</dbReference>
<dbReference type="PROSITE" id="PS00088">
    <property type="entry name" value="SOD_MN"/>
    <property type="match status" value="1"/>
</dbReference>
<proteinExistence type="evidence at protein level"/>
<sequence length="199" mass="22722">MAFELPNLPYAYDALEPHIDKQTMEIHHDKHHNTYVTKLNSAVEGTDLEAKSIEEIVANLDSVPSNIQTAVRNNGGGHLNHSLFWELLSPNSEEKGEVVDKIKEQWGSLDEFKKEFADKAAARFGSGWAWLVVNNGQLEIVTTPNQDNPITEGKTPILGLDVWEHAYYLKYQNKRPDYINAFWNVVNWEKVNELYNATK</sequence>
<keyword id="KW-0408">Iron</keyword>
<keyword id="KW-0464">Manganese</keyword>
<keyword id="KW-0479">Metal-binding</keyword>
<keyword id="KW-0560">Oxidoreductase</keyword>
<keyword id="KW-0346">Stress response</keyword>
<accession>P0C0Q6</accession>
<accession>P0C0Q5</accession>
<accession>Q93CF4</accession>
<protein>
    <recommendedName>
        <fullName>Superoxide dismutase [Mn/Fe]</fullName>
        <ecNumber evidence="4">1.15.1.1</ecNumber>
    </recommendedName>
</protein>
<feature type="chain" id="PRO_0000160077" description="Superoxide dismutase [Mn/Fe]">
    <location>
        <begin position="1"/>
        <end position="199"/>
    </location>
</feature>
<feature type="binding site" evidence="1">
    <location>
        <position position="27"/>
    </location>
    <ligand>
        <name>Fe(3+)</name>
        <dbReference type="ChEBI" id="CHEBI:29034"/>
    </ligand>
</feature>
<feature type="binding site" evidence="1">
    <location>
        <position position="27"/>
    </location>
    <ligand>
        <name>Mn(2+)</name>
        <dbReference type="ChEBI" id="CHEBI:29035"/>
    </ligand>
</feature>
<feature type="binding site" evidence="1">
    <location>
        <position position="81"/>
    </location>
    <ligand>
        <name>Fe(3+)</name>
        <dbReference type="ChEBI" id="CHEBI:29034"/>
    </ligand>
</feature>
<feature type="binding site" evidence="1">
    <location>
        <position position="81"/>
    </location>
    <ligand>
        <name>Mn(2+)</name>
        <dbReference type="ChEBI" id="CHEBI:29035"/>
    </ligand>
</feature>
<feature type="binding site" evidence="1">
    <location>
        <position position="161"/>
    </location>
    <ligand>
        <name>Fe(3+)</name>
        <dbReference type="ChEBI" id="CHEBI:29034"/>
    </ligand>
</feature>
<feature type="binding site" evidence="1">
    <location>
        <position position="161"/>
    </location>
    <ligand>
        <name>Mn(2+)</name>
        <dbReference type="ChEBI" id="CHEBI:29035"/>
    </ligand>
</feature>
<feature type="binding site" evidence="1">
    <location>
        <position position="165"/>
    </location>
    <ligand>
        <name>Fe(3+)</name>
        <dbReference type="ChEBI" id="CHEBI:29034"/>
    </ligand>
</feature>
<feature type="binding site" evidence="1">
    <location>
        <position position="165"/>
    </location>
    <ligand>
        <name>Mn(2+)</name>
        <dbReference type="ChEBI" id="CHEBI:29035"/>
    </ligand>
</feature>